<evidence type="ECO:0000250" key="1"/>
<evidence type="ECO:0000255" key="2"/>
<evidence type="ECO:0000269" key="3">
    <source>
    </source>
</evidence>
<evidence type="ECO:0000305" key="4"/>
<keyword id="KW-0968">Cytoplasmic vesicle</keyword>
<keyword id="KW-0256">Endoplasmic reticulum</keyword>
<keyword id="KW-0325">Glycoprotein</keyword>
<keyword id="KW-0333">Golgi apparatus</keyword>
<keyword id="KW-0472">Membrane</keyword>
<keyword id="KW-1185">Reference proteome</keyword>
<keyword id="KW-0762">Sugar transport</keyword>
<keyword id="KW-0812">Transmembrane</keyword>
<keyword id="KW-1133">Transmembrane helix</keyword>
<keyword id="KW-0813">Transport</keyword>
<dbReference type="EMBL" id="AF360395">
    <property type="protein sequence ID" value="AAK51897.1"/>
    <property type="molecule type" value="Genomic_DNA"/>
</dbReference>
<dbReference type="EMBL" id="CR380954">
    <property type="protein sequence ID" value="CAG60132.1"/>
    <property type="molecule type" value="Genomic_DNA"/>
</dbReference>
<dbReference type="RefSeq" id="XP_447199.1">
    <property type="nucleotide sequence ID" value="XM_447199.1"/>
</dbReference>
<dbReference type="SMR" id="Q6FRE5"/>
<dbReference type="FunCoup" id="Q6FRE5">
    <property type="interactions" value="580"/>
</dbReference>
<dbReference type="STRING" id="284593.Q6FRE5"/>
<dbReference type="GlyCosmos" id="Q6FRE5">
    <property type="glycosylation" value="3 sites, No reported glycans"/>
</dbReference>
<dbReference type="EnsemblFungi" id="CAGL0H09196g-T">
    <property type="protein sequence ID" value="CAGL0H09196g-T-p1"/>
    <property type="gene ID" value="CAGL0H09196g"/>
</dbReference>
<dbReference type="GeneID" id="2888653"/>
<dbReference type="KEGG" id="cgr:2888653"/>
<dbReference type="CGD" id="CAL0129728">
    <property type="gene designation" value="VRG4"/>
</dbReference>
<dbReference type="VEuPathDB" id="FungiDB:CAGL0H09196g"/>
<dbReference type="eggNOG" id="KOG1444">
    <property type="taxonomic scope" value="Eukaryota"/>
</dbReference>
<dbReference type="HOGENOM" id="CLU_025360_1_2_1"/>
<dbReference type="InParanoid" id="Q6FRE5"/>
<dbReference type="OMA" id="VWMLINC"/>
<dbReference type="Proteomes" id="UP000002428">
    <property type="component" value="Chromosome H"/>
</dbReference>
<dbReference type="GO" id="GO:0030659">
    <property type="term" value="C:cytoplasmic vesicle membrane"/>
    <property type="evidence" value="ECO:0007669"/>
    <property type="project" value="UniProtKB-SubCell"/>
</dbReference>
<dbReference type="GO" id="GO:0005789">
    <property type="term" value="C:endoplasmic reticulum membrane"/>
    <property type="evidence" value="ECO:0007669"/>
    <property type="project" value="UniProtKB-SubCell"/>
</dbReference>
<dbReference type="GO" id="GO:0000139">
    <property type="term" value="C:Golgi membrane"/>
    <property type="evidence" value="ECO:0007669"/>
    <property type="project" value="UniProtKB-SubCell"/>
</dbReference>
<dbReference type="GO" id="GO:0005338">
    <property type="term" value="F:nucleotide-sugar transmembrane transporter activity"/>
    <property type="evidence" value="ECO:0000316"/>
    <property type="project" value="CGD"/>
</dbReference>
<dbReference type="GO" id="GO:0006487">
    <property type="term" value="P:protein N-linked glycosylation"/>
    <property type="evidence" value="ECO:0000316"/>
    <property type="project" value="CGD"/>
</dbReference>
<dbReference type="InterPro" id="IPR050186">
    <property type="entry name" value="TPT_transporter"/>
</dbReference>
<dbReference type="NCBIfam" id="TIGR00803">
    <property type="entry name" value="nst"/>
    <property type="match status" value="1"/>
</dbReference>
<dbReference type="PANTHER" id="PTHR11132">
    <property type="entry name" value="SOLUTE CARRIER FAMILY 35"/>
    <property type="match status" value="1"/>
</dbReference>
<dbReference type="SUPFAM" id="SSF103481">
    <property type="entry name" value="Multidrug resistance efflux transporter EmrE"/>
    <property type="match status" value="1"/>
</dbReference>
<comment type="function">
    <text evidence="3">Involved in the import of GDP-mannose from the cytoplasm into the Golgi lumen.</text>
</comment>
<comment type="subunit">
    <text evidence="1">Homooligomer.</text>
</comment>
<comment type="subcellular location">
    <subcellularLocation>
        <location evidence="1">Golgi apparatus membrane</location>
        <topology evidence="1">Multi-pass membrane protein</topology>
    </subcellularLocation>
    <subcellularLocation>
        <location evidence="1">Cytoplasmic vesicle membrane</location>
        <topology evidence="1">Multi-pass membrane protein</topology>
    </subcellularLocation>
    <subcellularLocation>
        <location evidence="1">Endoplasmic reticulum membrane</location>
        <topology evidence="1">Multi-pass membrane protein</topology>
    </subcellularLocation>
</comment>
<comment type="similarity">
    <text evidence="4">Belongs to the TPT transporter family. SLC35D subfamily.</text>
</comment>
<sequence>MSELKSRIGNSGSIANSGPVSILCYCASSILMTVTNKFVVNTDGFNMFFVMLFAQSLVCTMCLMVLKMFGYAKYRPLNLIDVKNWLPISFLLVFMIFTSAKALKYMPVPIYTIFKNLTIILIAYGEVLFFGGSVTPMELSSFILMVLSSVVASLGDQQAAKIAQPLANNSILSPEYYWMFLNCICSASFVLIMRKRIKLTNFKDYDTMFYNNALALPILLGFSFLSEDWSSENLAQNFSGESLSAMIISGMTSVGISYCSGWCVRATSSTTYSMVGALNKLPIALAGLIFFDAPRNFLSIMSIFIGFASGLSYAVAKQKKVQKN</sequence>
<organism>
    <name type="scientific">Candida glabrata (strain ATCC 2001 / BCRC 20586 / JCM 3761 / NBRC 0622 / NRRL Y-65 / CBS 138)</name>
    <name type="common">Yeast</name>
    <name type="synonym">Nakaseomyces glabratus</name>
    <dbReference type="NCBI Taxonomy" id="284593"/>
    <lineage>
        <taxon>Eukaryota</taxon>
        <taxon>Fungi</taxon>
        <taxon>Dikarya</taxon>
        <taxon>Ascomycota</taxon>
        <taxon>Saccharomycotina</taxon>
        <taxon>Saccharomycetes</taxon>
        <taxon>Saccharomycetales</taxon>
        <taxon>Saccharomycetaceae</taxon>
        <taxon>Nakaseomyces</taxon>
    </lineage>
</organism>
<accession>Q6FRE5</accession>
<accession>Q96X08</accession>
<feature type="chain" id="PRO_0000333516" description="GDP-mannose transporter">
    <location>
        <begin position="1"/>
        <end position="324"/>
    </location>
</feature>
<feature type="topological domain" description="Cytoplasmic" evidence="1">
    <location>
        <begin position="1"/>
        <end position="13"/>
    </location>
</feature>
<feature type="transmembrane region" description="Helical" evidence="2">
    <location>
        <begin position="14"/>
        <end position="34"/>
    </location>
</feature>
<feature type="topological domain" description="Lumenal" evidence="1">
    <location>
        <begin position="35"/>
        <end position="44"/>
    </location>
</feature>
<feature type="transmembrane region" description="Helical" evidence="2">
    <location>
        <begin position="45"/>
        <end position="65"/>
    </location>
</feature>
<feature type="topological domain" description="Cytoplasmic" evidence="1">
    <location>
        <begin position="66"/>
        <end position="76"/>
    </location>
</feature>
<feature type="transmembrane region" description="Helical" evidence="2">
    <location>
        <begin position="77"/>
        <end position="97"/>
    </location>
</feature>
<feature type="topological domain" description="Lumenal" evidence="1">
    <location>
        <begin position="98"/>
        <end position="116"/>
    </location>
</feature>
<feature type="transmembrane region" description="Helical" evidence="2">
    <location>
        <begin position="117"/>
        <end position="137"/>
    </location>
</feature>
<feature type="topological domain" description="Cytoplasmic" evidence="1">
    <location>
        <position position="138"/>
    </location>
</feature>
<feature type="transmembrane region" description="Helical" evidence="2">
    <location>
        <begin position="139"/>
        <end position="159"/>
    </location>
</feature>
<feature type="topological domain" description="Lumenal" evidence="1">
    <location>
        <begin position="160"/>
        <end position="170"/>
    </location>
</feature>
<feature type="transmembrane region" description="Helical" evidence="2">
    <location>
        <begin position="171"/>
        <end position="191"/>
    </location>
</feature>
<feature type="topological domain" description="Cytoplasmic" evidence="1">
    <location>
        <begin position="192"/>
        <end position="204"/>
    </location>
</feature>
<feature type="transmembrane region" description="Helical" evidence="2">
    <location>
        <begin position="205"/>
        <end position="225"/>
    </location>
</feature>
<feature type="topological domain" description="Lumenal" evidence="1">
    <location>
        <begin position="226"/>
        <end position="243"/>
    </location>
</feature>
<feature type="transmembrane region" description="Helical" evidence="2">
    <location>
        <begin position="244"/>
        <end position="264"/>
    </location>
</feature>
<feature type="topological domain" description="Cytoplasmic" evidence="1">
    <location>
        <begin position="265"/>
        <end position="270"/>
    </location>
</feature>
<feature type="transmembrane region" description="Helical" evidence="2">
    <location>
        <begin position="271"/>
        <end position="291"/>
    </location>
</feature>
<feature type="topological domain" description="Lumenal" evidence="1">
    <location>
        <begin position="292"/>
        <end position="295"/>
    </location>
</feature>
<feature type="transmembrane region" description="Helical" evidence="2">
    <location>
        <begin position="296"/>
        <end position="316"/>
    </location>
</feature>
<feature type="topological domain" description="Cytoplasmic" evidence="1">
    <location>
        <begin position="317"/>
        <end position="324"/>
    </location>
</feature>
<feature type="glycosylation site" description="N-linked (GlcNAc...) asparagine" evidence="2">
    <location>
        <position position="116"/>
    </location>
</feature>
<feature type="glycosylation site" description="N-linked (GlcNAc...) asparagine" evidence="2">
    <location>
        <position position="168"/>
    </location>
</feature>
<feature type="glycosylation site" description="N-linked (GlcNAc...) asparagine" evidence="2">
    <location>
        <position position="237"/>
    </location>
</feature>
<feature type="sequence conflict" description="In Ref. 1; AAK51897." evidence="4" ref="1">
    <original>S</original>
    <variation>L</variation>
    <location>
        <position position="312"/>
    </location>
</feature>
<name>GMT_CANGA</name>
<gene>
    <name type="primary">VRG4</name>
    <name type="ordered locus">CAGL0H09196g</name>
</gene>
<protein>
    <recommendedName>
        <fullName>GDP-mannose transporter</fullName>
        <shortName>GMT</shortName>
    </recommendedName>
</protein>
<reference key="1">
    <citation type="journal article" date="2002" name="Yeast">
        <title>Identification of a Candida glabrata homologue of the S. cerevisiae VRG4 gene, encoding the Golgi GDP-mannose transporter.</title>
        <authorList>
            <person name="Nishikawa A."/>
            <person name="Mendez B."/>
            <person name="Jigami Y."/>
            <person name="Dean N."/>
        </authorList>
    </citation>
    <scope>NUCLEOTIDE SEQUENCE [GENOMIC DNA]</scope>
    <scope>FUNCTION</scope>
    <source>
        <strain>BG2</strain>
    </source>
</reference>
<reference key="2">
    <citation type="journal article" date="2004" name="Nature">
        <title>Genome evolution in yeasts.</title>
        <authorList>
            <person name="Dujon B."/>
            <person name="Sherman D."/>
            <person name="Fischer G."/>
            <person name="Durrens P."/>
            <person name="Casaregola S."/>
            <person name="Lafontaine I."/>
            <person name="de Montigny J."/>
            <person name="Marck C."/>
            <person name="Neuveglise C."/>
            <person name="Talla E."/>
            <person name="Goffard N."/>
            <person name="Frangeul L."/>
            <person name="Aigle M."/>
            <person name="Anthouard V."/>
            <person name="Babour A."/>
            <person name="Barbe V."/>
            <person name="Barnay S."/>
            <person name="Blanchin S."/>
            <person name="Beckerich J.-M."/>
            <person name="Beyne E."/>
            <person name="Bleykasten C."/>
            <person name="Boisrame A."/>
            <person name="Boyer J."/>
            <person name="Cattolico L."/>
            <person name="Confanioleri F."/>
            <person name="de Daruvar A."/>
            <person name="Despons L."/>
            <person name="Fabre E."/>
            <person name="Fairhead C."/>
            <person name="Ferry-Dumazet H."/>
            <person name="Groppi A."/>
            <person name="Hantraye F."/>
            <person name="Hennequin C."/>
            <person name="Jauniaux N."/>
            <person name="Joyet P."/>
            <person name="Kachouri R."/>
            <person name="Kerrest A."/>
            <person name="Koszul R."/>
            <person name="Lemaire M."/>
            <person name="Lesur I."/>
            <person name="Ma L."/>
            <person name="Muller H."/>
            <person name="Nicaud J.-M."/>
            <person name="Nikolski M."/>
            <person name="Oztas S."/>
            <person name="Ozier-Kalogeropoulos O."/>
            <person name="Pellenz S."/>
            <person name="Potier S."/>
            <person name="Richard G.-F."/>
            <person name="Straub M.-L."/>
            <person name="Suleau A."/>
            <person name="Swennen D."/>
            <person name="Tekaia F."/>
            <person name="Wesolowski-Louvel M."/>
            <person name="Westhof E."/>
            <person name="Wirth B."/>
            <person name="Zeniou-Meyer M."/>
            <person name="Zivanovic Y."/>
            <person name="Bolotin-Fukuhara M."/>
            <person name="Thierry A."/>
            <person name="Bouchier C."/>
            <person name="Caudron B."/>
            <person name="Scarpelli C."/>
            <person name="Gaillardin C."/>
            <person name="Weissenbach J."/>
            <person name="Wincker P."/>
            <person name="Souciet J.-L."/>
        </authorList>
    </citation>
    <scope>NUCLEOTIDE SEQUENCE [LARGE SCALE GENOMIC DNA]</scope>
    <source>
        <strain>ATCC 2001 / BCRC 20586 / JCM 3761 / NBRC 0622 / NRRL Y-65 / CBS 138</strain>
    </source>
</reference>
<proteinExistence type="inferred from homology"/>